<protein>
    <recommendedName>
        <fullName evidence="1">Ribosomal RNA small subunit methyltransferase H</fullName>
        <ecNumber evidence="1">2.1.1.199</ecNumber>
    </recommendedName>
    <alternativeName>
        <fullName evidence="1">16S rRNA m(4)C1402 methyltransferase</fullName>
    </alternativeName>
    <alternativeName>
        <fullName evidence="1">rRNA (cytosine-N(4)-)-methyltransferase RsmH</fullName>
    </alternativeName>
</protein>
<gene>
    <name evidence="1" type="primary">rsmH</name>
    <name type="synonym">mraW</name>
    <name type="ordered locus">BCI_0524</name>
</gene>
<name>RSMH_BAUCH</name>
<keyword id="KW-0963">Cytoplasm</keyword>
<keyword id="KW-0489">Methyltransferase</keyword>
<keyword id="KW-1185">Reference proteome</keyword>
<keyword id="KW-0698">rRNA processing</keyword>
<keyword id="KW-0949">S-adenosyl-L-methionine</keyword>
<keyword id="KW-0808">Transferase</keyword>
<feature type="chain" id="PRO_0000386742" description="Ribosomal RNA small subunit methyltransferase H">
    <location>
        <begin position="1"/>
        <end position="317"/>
    </location>
</feature>
<feature type="binding site" evidence="1">
    <location>
        <begin position="36"/>
        <end position="38"/>
    </location>
    <ligand>
        <name>S-adenosyl-L-methionine</name>
        <dbReference type="ChEBI" id="CHEBI:59789"/>
    </ligand>
</feature>
<feature type="binding site" evidence="1">
    <location>
        <position position="56"/>
    </location>
    <ligand>
        <name>S-adenosyl-L-methionine</name>
        <dbReference type="ChEBI" id="CHEBI:59789"/>
    </ligand>
</feature>
<feature type="binding site" evidence="1">
    <location>
        <position position="80"/>
    </location>
    <ligand>
        <name>S-adenosyl-L-methionine</name>
        <dbReference type="ChEBI" id="CHEBI:59789"/>
    </ligand>
</feature>
<feature type="binding site" evidence="1">
    <location>
        <position position="102"/>
    </location>
    <ligand>
        <name>S-adenosyl-L-methionine</name>
        <dbReference type="ChEBI" id="CHEBI:59789"/>
    </ligand>
</feature>
<feature type="binding site" evidence="1">
    <location>
        <position position="109"/>
    </location>
    <ligand>
        <name>S-adenosyl-L-methionine</name>
        <dbReference type="ChEBI" id="CHEBI:59789"/>
    </ligand>
</feature>
<proteinExistence type="inferred from homology"/>
<evidence type="ECO:0000255" key="1">
    <source>
        <dbReference type="HAMAP-Rule" id="MF_01007"/>
    </source>
</evidence>
<organism>
    <name type="scientific">Baumannia cicadellinicola subsp. Homalodisca coagulata</name>
    <dbReference type="NCBI Taxonomy" id="374463"/>
    <lineage>
        <taxon>Bacteria</taxon>
        <taxon>Pseudomonadati</taxon>
        <taxon>Pseudomonadota</taxon>
        <taxon>Gammaproteobacteria</taxon>
        <taxon>Candidatus Palibaumannia</taxon>
    </lineage>
</organism>
<dbReference type="EC" id="2.1.1.199" evidence="1"/>
<dbReference type="EMBL" id="CP000238">
    <property type="protein sequence ID" value="ABF14047.1"/>
    <property type="molecule type" value="Genomic_DNA"/>
</dbReference>
<dbReference type="RefSeq" id="WP_011520687.1">
    <property type="nucleotide sequence ID" value="NC_007984.1"/>
</dbReference>
<dbReference type="SMR" id="Q1LSW0"/>
<dbReference type="STRING" id="374463.BCI_0524"/>
<dbReference type="KEGG" id="bci:BCI_0524"/>
<dbReference type="HOGENOM" id="CLU_038422_2_0_6"/>
<dbReference type="OrthoDB" id="9806637at2"/>
<dbReference type="Proteomes" id="UP000002427">
    <property type="component" value="Chromosome"/>
</dbReference>
<dbReference type="GO" id="GO:0005737">
    <property type="term" value="C:cytoplasm"/>
    <property type="evidence" value="ECO:0007669"/>
    <property type="project" value="UniProtKB-SubCell"/>
</dbReference>
<dbReference type="GO" id="GO:0071424">
    <property type="term" value="F:rRNA (cytosine-N4-)-methyltransferase activity"/>
    <property type="evidence" value="ECO:0007669"/>
    <property type="project" value="UniProtKB-UniRule"/>
</dbReference>
<dbReference type="GO" id="GO:0070475">
    <property type="term" value="P:rRNA base methylation"/>
    <property type="evidence" value="ECO:0007669"/>
    <property type="project" value="UniProtKB-UniRule"/>
</dbReference>
<dbReference type="Gene3D" id="1.10.150.170">
    <property type="entry name" value="Putative methyltransferase TM0872, insert domain"/>
    <property type="match status" value="1"/>
</dbReference>
<dbReference type="Gene3D" id="3.40.50.150">
    <property type="entry name" value="Vaccinia Virus protein VP39"/>
    <property type="match status" value="1"/>
</dbReference>
<dbReference type="HAMAP" id="MF_01007">
    <property type="entry name" value="16SrRNA_methyltr_H"/>
    <property type="match status" value="1"/>
</dbReference>
<dbReference type="InterPro" id="IPR002903">
    <property type="entry name" value="RsmH"/>
</dbReference>
<dbReference type="InterPro" id="IPR023397">
    <property type="entry name" value="SAM-dep_MeTrfase_MraW_recog"/>
</dbReference>
<dbReference type="InterPro" id="IPR029063">
    <property type="entry name" value="SAM-dependent_MTases_sf"/>
</dbReference>
<dbReference type="NCBIfam" id="TIGR00006">
    <property type="entry name" value="16S rRNA (cytosine(1402)-N(4))-methyltransferase RsmH"/>
    <property type="match status" value="1"/>
</dbReference>
<dbReference type="PANTHER" id="PTHR11265:SF0">
    <property type="entry name" value="12S RRNA N4-METHYLCYTIDINE METHYLTRANSFERASE"/>
    <property type="match status" value="1"/>
</dbReference>
<dbReference type="PANTHER" id="PTHR11265">
    <property type="entry name" value="S-ADENOSYL-METHYLTRANSFERASE MRAW"/>
    <property type="match status" value="1"/>
</dbReference>
<dbReference type="Pfam" id="PF01795">
    <property type="entry name" value="Methyltransf_5"/>
    <property type="match status" value="1"/>
</dbReference>
<dbReference type="PIRSF" id="PIRSF004486">
    <property type="entry name" value="MraW"/>
    <property type="match status" value="1"/>
</dbReference>
<dbReference type="SUPFAM" id="SSF81799">
    <property type="entry name" value="Putative methyltransferase TM0872, insert domain"/>
    <property type="match status" value="1"/>
</dbReference>
<dbReference type="SUPFAM" id="SSF53335">
    <property type="entry name" value="S-adenosyl-L-methionine-dependent methyltransferases"/>
    <property type="match status" value="1"/>
</dbReference>
<reference key="1">
    <citation type="journal article" date="2006" name="PLoS Biol.">
        <title>Metabolic complementarity and genomics of the dual bacterial symbiosis of sharpshooters.</title>
        <authorList>
            <person name="Wu D."/>
            <person name="Daugherty S.C."/>
            <person name="Van Aken S.E."/>
            <person name="Pai G.H."/>
            <person name="Watkins K.L."/>
            <person name="Khouri H."/>
            <person name="Tallon L.J."/>
            <person name="Zaborsky J.M."/>
            <person name="Dunbar H.E."/>
            <person name="Tran P.L."/>
            <person name="Moran N.A."/>
            <person name="Eisen J.A."/>
        </authorList>
    </citation>
    <scope>NUCLEOTIDE SEQUENCE [LARGE SCALE GENOMIC DNA]</scope>
</reference>
<accession>Q1LSW0</accession>
<sequence length="317" mass="35807">MAIDYDKHIPVLLNEAVTALNIKKDGIYIDGTFGRGGHSRLILSKLGNKGRLLAIDRDPAAIAAGRNIHDLRFTIVQRPFSTIADYIAELNLIGCIDGILLDLGISSPQLADPDRGFSFRHNGKLDMRMDTTCGISAREWLKQASVQEMTWVLQHFGEERFAKRISQAIFHQNRRRLITSTSELAKLITTIVPWSNKHKHPATRSFQAIRIYINNELKEIEQVLNSALNILAIGGKLVVISFHSLEDRLVKYFINKHSKLPLPPTGISLTEKQIADLYKNRHLTLKNLGKIRPSIQEIKVNPRARSALLRFAEKLDI</sequence>
<comment type="function">
    <text evidence="1">Specifically methylates the N4 position of cytidine in position 1402 (C1402) of 16S rRNA.</text>
</comment>
<comment type="catalytic activity">
    <reaction evidence="1">
        <text>cytidine(1402) in 16S rRNA + S-adenosyl-L-methionine = N(4)-methylcytidine(1402) in 16S rRNA + S-adenosyl-L-homocysteine + H(+)</text>
        <dbReference type="Rhea" id="RHEA:42928"/>
        <dbReference type="Rhea" id="RHEA-COMP:10286"/>
        <dbReference type="Rhea" id="RHEA-COMP:10287"/>
        <dbReference type="ChEBI" id="CHEBI:15378"/>
        <dbReference type="ChEBI" id="CHEBI:57856"/>
        <dbReference type="ChEBI" id="CHEBI:59789"/>
        <dbReference type="ChEBI" id="CHEBI:74506"/>
        <dbReference type="ChEBI" id="CHEBI:82748"/>
        <dbReference type="EC" id="2.1.1.199"/>
    </reaction>
</comment>
<comment type="subcellular location">
    <subcellularLocation>
        <location evidence="1">Cytoplasm</location>
    </subcellularLocation>
</comment>
<comment type="similarity">
    <text evidence="1">Belongs to the methyltransferase superfamily. RsmH family.</text>
</comment>